<dbReference type="EMBL" id="U12055">
    <property type="protein sequence ID" value="AAA76688.1"/>
    <property type="molecule type" value="Genomic_RNA"/>
</dbReference>
<dbReference type="SMR" id="Q70624"/>
<dbReference type="Proteomes" id="UP000165413">
    <property type="component" value="Genome"/>
</dbReference>
<dbReference type="GO" id="GO:0030430">
    <property type="term" value="C:host cell cytoplasm"/>
    <property type="evidence" value="ECO:0007669"/>
    <property type="project" value="UniProtKB-SubCell"/>
</dbReference>
<dbReference type="GO" id="GO:0044196">
    <property type="term" value="C:host cell nucleolus"/>
    <property type="evidence" value="ECO:0007669"/>
    <property type="project" value="UniProtKB-SubCell"/>
</dbReference>
<dbReference type="GO" id="GO:0003700">
    <property type="term" value="F:DNA-binding transcription factor activity"/>
    <property type="evidence" value="ECO:0007669"/>
    <property type="project" value="UniProtKB-UniRule"/>
</dbReference>
<dbReference type="GO" id="GO:0003723">
    <property type="term" value="F:RNA binding"/>
    <property type="evidence" value="ECO:0007669"/>
    <property type="project" value="UniProtKB-UniRule"/>
</dbReference>
<dbReference type="GO" id="GO:0051028">
    <property type="term" value="P:mRNA transport"/>
    <property type="evidence" value="ECO:0007669"/>
    <property type="project" value="UniProtKB-UniRule"/>
</dbReference>
<dbReference type="GO" id="GO:0016032">
    <property type="term" value="P:viral process"/>
    <property type="evidence" value="ECO:0007669"/>
    <property type="project" value="UniProtKB-UniRule"/>
</dbReference>
<dbReference type="Gene3D" id="6.10.140.630">
    <property type="match status" value="1"/>
</dbReference>
<dbReference type="HAMAP" id="MF_04077">
    <property type="entry name" value="REV_HIV1"/>
    <property type="match status" value="1"/>
</dbReference>
<dbReference type="InterPro" id="IPR000625">
    <property type="entry name" value="REV_protein"/>
</dbReference>
<dbReference type="Pfam" id="PF00424">
    <property type="entry name" value="REV"/>
    <property type="match status" value="1"/>
</dbReference>
<keyword id="KW-0014">AIDS</keyword>
<keyword id="KW-1035">Host cytoplasm</keyword>
<keyword id="KW-1048">Host nucleus</keyword>
<keyword id="KW-0945">Host-virus interaction</keyword>
<keyword id="KW-0488">Methylation</keyword>
<keyword id="KW-0509">mRNA transport</keyword>
<keyword id="KW-0597">Phosphoprotein</keyword>
<keyword id="KW-0694">RNA-binding</keyword>
<keyword id="KW-0813">Transport</keyword>
<protein>
    <recommendedName>
        <fullName evidence="1">Protein Rev</fullName>
    </recommendedName>
    <alternativeName>
        <fullName evidence="1">ART/TRS</fullName>
    </alternativeName>
    <alternativeName>
        <fullName evidence="1">Anti-repression transactivator</fullName>
    </alternativeName>
    <alternativeName>
        <fullName evidence="1">Regulator of expression of viral proteins</fullName>
    </alternativeName>
</protein>
<comment type="function">
    <text evidence="1">Escorts unspliced or incompletely spliced viral pre-mRNAs (late transcripts) out of the nucleus of infected cells. These pre-mRNAs carry a recognition sequence called Rev responsive element (RRE) located in the env gene, that is not present in fully spliced viral mRNAs (early transcripts). This function is essential since most viral proteins are translated from unspliced or partially spliced pre-mRNAs which cannot exit the nucleus by the pathway used by fully processed cellular mRNAs. Rev itself is translated from a fully spliced mRNA that readily exits the nucleus. Rev's nuclear localization signal (NLS) binds directly to KPNB1/Importin beta-1 without previous binding to KPNA1/Importin alpha-1. KPNB1 binds to the GDP bound form of RAN (Ran-GDP) and targets Rev to the nucleus. In the nucleus, the conversion from Ran-GDP to Ran-GTP dissociates Rev from KPNB1 and allows Rev's binding to the RRE in viral pre-mRNAs. Rev multimerization on the RRE via cooperative assembly exposes its nuclear export signal (NES) to the surface. Rev can then form a complex with XPO1/CRM1 and Ran-GTP, leading to nuclear export of the complex. Conversion from Ran-GTP to Ran-GDP mediates dissociation of the Rev/RRE/XPO1/RAN complex, so that Rev can return to the nucleus for a subsequent round of export. Beside KPNB1, also seems to interact with TNPO1/Transportin-1, RANBP5/IPO5 and IPO7/RANBP7 for nuclear import. The nucleoporin-like HRB/RIP is an essential cofactor that probably indirectly interacts with Rev to release HIV RNAs from the perinuclear region to the cytoplasm.</text>
</comment>
<comment type="subunit">
    <text evidence="1">Homomultimer; when bound to the RRE. Multimeric assembly is essential for activity and may involve XPO1. Binds to human KPNB1, XPO1, TNPO1, RANBP5 and IPO7. Interacts with the viral Integrase. Interacts with human KHDRBS1. Interacts with human NAP1; this interaction decreases Rev multimerization and stimulates its activity. Interacts with human DEAD-box helicases DDX3 and DDX24; these interactions may serve for viral RNA export to the cytoplasm and packaging, respectively. Interacts with human PSIP1; this interaction may inhibit HIV-1 DNA integration by promoting dissociation of the Integrase-LEDGF/p75 complex.</text>
</comment>
<comment type="subcellular location">
    <subcellularLocation>
        <location evidence="1">Host nucleus</location>
        <location evidence="1">Host nucleolus</location>
    </subcellularLocation>
    <subcellularLocation>
        <location evidence="1">Host cytoplasm</location>
    </subcellularLocation>
    <text evidence="1">The presence of both nuclear import and nuclear export signals leads to continuous shuttling between the nucleus and cytoplasm.</text>
</comment>
<comment type="domain">
    <text evidence="1">The RNA-binding motif binds to the RRE, a 240 bp stem-and-loop structure present in incompletely spliced viral pre-mRNAs. This region also contains the NLS which mediates nuclear localization via KPNB1 binding and, when the N-terminal sequence is present, nucleolar targeting. These overlapping functions prevent Rev bound to RRE from undesirable return to the nucleus. When Rev binds the RRE, the NLS becomes masked while the NES remains accessible. The leucine-rich NES mediates binding to human XPO1.</text>
</comment>
<comment type="PTM">
    <text evidence="1">Asymmetrically arginine dimethylated at one site by host PRMT6. Methylation impairs the RNA-binding activity and export of viral RNA from the nucleus to the cytoplasm.</text>
</comment>
<comment type="PTM">
    <text evidence="1">Phosphorylated by protein kinase CK2. Presence of, and maybe binding to the N-terminus of the regulatory beta subunit of CK2 is necessary for CK2-mediated Rev's phosphorylation.</text>
</comment>
<comment type="miscellaneous">
    <text evidence="1">HIV-1 lineages are divided in three main groups, M (for Major), O (for Outlier), and N (for New, or Non-M, Non-O). The vast majority of strains found worldwide belong to the group M. Group O seems to be endemic to and largely confined to Cameroon and neighboring countries in West Central Africa, where these viruses represent a small minority of HIV-1 strains. The group N is represented by a limited number of isolates from Cameroonian persons. The group M is further subdivided in 9 clades or subtypes (A to D, F to H, J and K).</text>
</comment>
<comment type="similarity">
    <text evidence="1">Belongs to the HIV-1 REV protein family.</text>
</comment>
<evidence type="ECO:0000255" key="1">
    <source>
        <dbReference type="HAMAP-Rule" id="MF_04077"/>
    </source>
</evidence>
<evidence type="ECO:0000256" key="2">
    <source>
        <dbReference type="SAM" id="MobiDB-lite"/>
    </source>
</evidence>
<reference key="1">
    <citation type="journal article" date="1994" name="AIDS Res. Hum. Retroviruses">
        <title>Viral variability and serum antibody response in a laboratory worker infected with HIV type 1 (HTLV type IIIB).</title>
        <authorList>
            <person name="Reitz M.S. Jr."/>
            <person name="Hall L."/>
            <person name="Robert-Guroff M."/>
            <person name="Lautenberger J.A."/>
            <person name="Hahn B.M."/>
            <person name="Shaw G.M."/>
            <person name="Kong L.I."/>
            <person name="Weiss S.H."/>
            <person name="Waters D."/>
            <person name="Gallo R.C."/>
            <person name="Blattner W."/>
        </authorList>
    </citation>
    <scope>NUCLEOTIDE SEQUENCE [GENOMIC RNA]</scope>
</reference>
<reference key="2">
    <citation type="journal article" date="1999" name="Arch. Biochem. Biophys.">
        <title>The ins and outs of HIV Rev.</title>
        <authorList>
            <person name="Hope T.J."/>
        </authorList>
    </citation>
    <scope>REVIEW</scope>
</reference>
<organism>
    <name type="scientific">Human immunodeficiency virus type 1 group M subtype B (isolate LW123)</name>
    <name type="common">HIV-1</name>
    <dbReference type="NCBI Taxonomy" id="82834"/>
    <lineage>
        <taxon>Viruses</taxon>
        <taxon>Riboviria</taxon>
        <taxon>Pararnavirae</taxon>
        <taxon>Artverviricota</taxon>
        <taxon>Revtraviricetes</taxon>
        <taxon>Ortervirales</taxon>
        <taxon>Retroviridae</taxon>
        <taxon>Orthoretrovirinae</taxon>
        <taxon>Lentivirus</taxon>
        <taxon>Human immunodeficiency virus type 1</taxon>
    </lineage>
</organism>
<gene>
    <name evidence="1" type="primary">rev</name>
</gene>
<feature type="chain" id="PRO_0000085253" description="Protein Rev">
    <location>
        <begin position="1"/>
        <end position="118"/>
    </location>
</feature>
<feature type="region of interest" description="Homomultimerization" evidence="1">
    <location>
        <begin position="18"/>
        <end position="28"/>
    </location>
</feature>
<feature type="region of interest" description="Disordered" evidence="2">
    <location>
        <begin position="23"/>
        <end position="52"/>
    </location>
</feature>
<feature type="region of interest" description="Disordered" evidence="2">
    <location>
        <begin position="92"/>
        <end position="118"/>
    </location>
</feature>
<feature type="short sequence motif" description="Nuclear localization signal and RNA-binding (RRE)" evidence="1">
    <location>
        <begin position="36"/>
        <end position="52"/>
    </location>
</feature>
<feature type="short sequence motif" description="Nuclear export signal and binding to XPO1" evidence="1">
    <location>
        <begin position="75"/>
        <end position="86"/>
    </location>
</feature>
<feature type="compositionally biased region" description="Basic residues" evidence="2">
    <location>
        <begin position="38"/>
        <end position="49"/>
    </location>
</feature>
<feature type="modified residue" description="Phosphoserine; by host CK2" evidence="1">
    <location>
        <position position="5"/>
    </location>
</feature>
<feature type="modified residue" description="Phosphoserine; by host CK2" evidence="1">
    <location>
        <position position="8"/>
    </location>
</feature>
<feature type="modified residue" description="Phosphoserine; by host" evidence="1">
    <location>
        <position position="94"/>
    </location>
</feature>
<feature type="modified residue" description="Phosphoserine; by host" evidence="1">
    <location>
        <position position="101"/>
    </location>
</feature>
<name>REV_HV1LW</name>
<accession>Q70624</accession>
<sequence>MAGRSGDSDEDLLKAVRLIKFLYQSSSDPPPNPGGTRQARRNRRRRWRERQRQIHSISERILSTYLGRSAKPVPLQLPPLERLTLDCNEDCGTSGTQGVGSPQILVESPTVLESGTKE</sequence>
<organismHost>
    <name type="scientific">Homo sapiens</name>
    <name type="common">Human</name>
    <dbReference type="NCBI Taxonomy" id="9606"/>
</organismHost>
<proteinExistence type="inferred from homology"/>